<keyword id="KW-0963">Cytoplasm</keyword>
<keyword id="KW-1185">Reference proteome</keyword>
<keyword id="KW-0819">tRNA processing</keyword>
<feature type="chain" id="PRO_0000234513" description="Protein TusB">
    <location>
        <begin position="1"/>
        <end position="95"/>
    </location>
</feature>
<evidence type="ECO:0000255" key="1">
    <source>
        <dbReference type="HAMAP-Rule" id="MF_01564"/>
    </source>
</evidence>
<gene>
    <name evidence="1" type="primary">tusB</name>
    <name type="ordered locus">c4117</name>
</gene>
<accession>Q8FCY3</accession>
<protein>
    <recommendedName>
        <fullName evidence="1">Protein TusB</fullName>
    </recommendedName>
    <alternativeName>
        <fullName evidence="1">tRNA 2-thiouridine synthesizing protein B</fullName>
    </alternativeName>
</protein>
<reference key="1">
    <citation type="journal article" date="2002" name="Proc. Natl. Acad. Sci. U.S.A.">
        <title>Extensive mosaic structure revealed by the complete genome sequence of uropathogenic Escherichia coli.</title>
        <authorList>
            <person name="Welch R.A."/>
            <person name="Burland V."/>
            <person name="Plunkett G. III"/>
            <person name="Redford P."/>
            <person name="Roesch P."/>
            <person name="Rasko D."/>
            <person name="Buckles E.L."/>
            <person name="Liou S.-R."/>
            <person name="Boutin A."/>
            <person name="Hackett J."/>
            <person name="Stroud D."/>
            <person name="Mayhew G.F."/>
            <person name="Rose D.J."/>
            <person name="Zhou S."/>
            <person name="Schwartz D.C."/>
            <person name="Perna N.T."/>
            <person name="Mobley H.L.T."/>
            <person name="Donnenberg M.S."/>
            <person name="Blattner F.R."/>
        </authorList>
    </citation>
    <scope>NUCLEOTIDE SEQUENCE [LARGE SCALE GENOMIC DNA]</scope>
    <source>
        <strain>CFT073 / ATCC 700928 / UPEC</strain>
    </source>
</reference>
<comment type="function">
    <text evidence="1">Part of a sulfur-relay system required for 2-thiolation of 5-methylaminomethyl-2-thiouridine (mnm(5)s(2)U) at tRNA wobble positions.</text>
</comment>
<comment type="subunit">
    <text evidence="1">Heterohexamer, formed by a dimer of trimers. The hexameric TusBCD complex contains 2 copies each of TusB, TusC and TusD. The TusBCD complex interacts with TusE.</text>
</comment>
<comment type="subcellular location">
    <subcellularLocation>
        <location evidence="1">Cytoplasm</location>
    </subcellularLocation>
</comment>
<comment type="similarity">
    <text evidence="1">Belongs to the DsrH/TusB family.</text>
</comment>
<proteinExistence type="inferred from homology"/>
<organism>
    <name type="scientific">Escherichia coli O6:H1 (strain CFT073 / ATCC 700928 / UPEC)</name>
    <dbReference type="NCBI Taxonomy" id="199310"/>
    <lineage>
        <taxon>Bacteria</taxon>
        <taxon>Pseudomonadati</taxon>
        <taxon>Pseudomonadota</taxon>
        <taxon>Gammaproteobacteria</taxon>
        <taxon>Enterobacterales</taxon>
        <taxon>Enterobacteriaceae</taxon>
        <taxon>Escherichia</taxon>
    </lineage>
</organism>
<name>TUSB_ECOL6</name>
<dbReference type="EMBL" id="AE014075">
    <property type="protein sequence ID" value="AAN82555.1"/>
    <property type="molecule type" value="Genomic_DNA"/>
</dbReference>
<dbReference type="RefSeq" id="WP_000903381.1">
    <property type="nucleotide sequence ID" value="NZ_CP051263.1"/>
</dbReference>
<dbReference type="SMR" id="Q8FCY3"/>
<dbReference type="STRING" id="199310.c4117"/>
<dbReference type="KEGG" id="ecc:c4117"/>
<dbReference type="eggNOG" id="COG2168">
    <property type="taxonomic scope" value="Bacteria"/>
</dbReference>
<dbReference type="HOGENOM" id="CLU_166087_2_1_6"/>
<dbReference type="BioCyc" id="ECOL199310:C4117-MONOMER"/>
<dbReference type="Proteomes" id="UP000001410">
    <property type="component" value="Chromosome"/>
</dbReference>
<dbReference type="GO" id="GO:1990228">
    <property type="term" value="C:sulfurtransferase complex"/>
    <property type="evidence" value="ECO:0007669"/>
    <property type="project" value="TreeGrafter"/>
</dbReference>
<dbReference type="GO" id="GO:0002143">
    <property type="term" value="P:tRNA wobble position uridine thiolation"/>
    <property type="evidence" value="ECO:0007669"/>
    <property type="project" value="InterPro"/>
</dbReference>
<dbReference type="FunFam" id="3.40.1260.10:FF:000002">
    <property type="entry name" value="Sulfurtransferase TusB"/>
    <property type="match status" value="1"/>
</dbReference>
<dbReference type="Gene3D" id="3.40.1260.10">
    <property type="entry name" value="DsrEFH-like"/>
    <property type="match status" value="1"/>
</dbReference>
<dbReference type="HAMAP" id="MF_01564">
    <property type="entry name" value="Thiourid_synth_B"/>
    <property type="match status" value="1"/>
</dbReference>
<dbReference type="InterPro" id="IPR027396">
    <property type="entry name" value="DsrEFH-like"/>
</dbReference>
<dbReference type="InterPro" id="IPR023526">
    <property type="entry name" value="Sulphur_relay_TusB"/>
</dbReference>
<dbReference type="InterPro" id="IPR007215">
    <property type="entry name" value="Sulphur_relay_TusB/DsrH"/>
</dbReference>
<dbReference type="NCBIfam" id="NF010035">
    <property type="entry name" value="PRK13510.1"/>
    <property type="match status" value="1"/>
</dbReference>
<dbReference type="NCBIfam" id="TIGR03011">
    <property type="entry name" value="sulf_tusB_dsrH"/>
    <property type="match status" value="1"/>
</dbReference>
<dbReference type="PANTHER" id="PTHR37526">
    <property type="entry name" value="PROTEIN TUSB"/>
    <property type="match status" value="1"/>
</dbReference>
<dbReference type="PANTHER" id="PTHR37526:SF1">
    <property type="entry name" value="PROTEIN TUSB"/>
    <property type="match status" value="1"/>
</dbReference>
<dbReference type="Pfam" id="PF04077">
    <property type="entry name" value="DsrH"/>
    <property type="match status" value="1"/>
</dbReference>
<dbReference type="SUPFAM" id="SSF75169">
    <property type="entry name" value="DsrEFH-like"/>
    <property type="match status" value="1"/>
</dbReference>
<sequence>MLHTLHRSPWLTDFAALLRLLSEGDELLLLQDGVTAAVDGNRYLESLRNAPIKVYALNEDLIARGLTGRISNDIIPIDYTDFVRLTVKHSSQMAW</sequence>